<organism>
    <name type="scientific">Shewanella baltica (strain OS185)</name>
    <dbReference type="NCBI Taxonomy" id="402882"/>
    <lineage>
        <taxon>Bacteria</taxon>
        <taxon>Pseudomonadati</taxon>
        <taxon>Pseudomonadota</taxon>
        <taxon>Gammaproteobacteria</taxon>
        <taxon>Alteromonadales</taxon>
        <taxon>Shewanellaceae</taxon>
        <taxon>Shewanella</taxon>
    </lineage>
</organism>
<dbReference type="EC" id="3.1.3.5" evidence="1"/>
<dbReference type="EMBL" id="CP000753">
    <property type="protein sequence ID" value="ABS09262.1"/>
    <property type="molecule type" value="Genomic_DNA"/>
</dbReference>
<dbReference type="RefSeq" id="WP_006086855.1">
    <property type="nucleotide sequence ID" value="NC_009665.1"/>
</dbReference>
<dbReference type="SMR" id="A6WR23"/>
<dbReference type="KEGG" id="sbm:Shew185_3131"/>
<dbReference type="HOGENOM" id="CLU_045192_1_2_6"/>
<dbReference type="GO" id="GO:0005737">
    <property type="term" value="C:cytoplasm"/>
    <property type="evidence" value="ECO:0007669"/>
    <property type="project" value="UniProtKB-SubCell"/>
</dbReference>
<dbReference type="GO" id="GO:0008254">
    <property type="term" value="F:3'-nucleotidase activity"/>
    <property type="evidence" value="ECO:0007669"/>
    <property type="project" value="TreeGrafter"/>
</dbReference>
<dbReference type="GO" id="GO:0008253">
    <property type="term" value="F:5'-nucleotidase activity"/>
    <property type="evidence" value="ECO:0007669"/>
    <property type="project" value="UniProtKB-UniRule"/>
</dbReference>
<dbReference type="GO" id="GO:0004309">
    <property type="term" value="F:exopolyphosphatase activity"/>
    <property type="evidence" value="ECO:0007669"/>
    <property type="project" value="TreeGrafter"/>
</dbReference>
<dbReference type="GO" id="GO:0046872">
    <property type="term" value="F:metal ion binding"/>
    <property type="evidence" value="ECO:0007669"/>
    <property type="project" value="UniProtKB-UniRule"/>
</dbReference>
<dbReference type="GO" id="GO:0000166">
    <property type="term" value="F:nucleotide binding"/>
    <property type="evidence" value="ECO:0007669"/>
    <property type="project" value="UniProtKB-KW"/>
</dbReference>
<dbReference type="FunFam" id="3.40.1210.10:FF:000001">
    <property type="entry name" value="5'/3'-nucleotidase SurE"/>
    <property type="match status" value="1"/>
</dbReference>
<dbReference type="Gene3D" id="3.40.1210.10">
    <property type="entry name" value="Survival protein SurE-like phosphatase/nucleotidase"/>
    <property type="match status" value="1"/>
</dbReference>
<dbReference type="HAMAP" id="MF_00060">
    <property type="entry name" value="SurE"/>
    <property type="match status" value="1"/>
</dbReference>
<dbReference type="InterPro" id="IPR030048">
    <property type="entry name" value="SurE"/>
</dbReference>
<dbReference type="InterPro" id="IPR002828">
    <property type="entry name" value="SurE-like_Pase/nucleotidase"/>
</dbReference>
<dbReference type="InterPro" id="IPR036523">
    <property type="entry name" value="SurE-like_sf"/>
</dbReference>
<dbReference type="NCBIfam" id="NF001489">
    <property type="entry name" value="PRK00346.1-3"/>
    <property type="match status" value="1"/>
</dbReference>
<dbReference type="NCBIfam" id="NF001490">
    <property type="entry name" value="PRK00346.1-4"/>
    <property type="match status" value="1"/>
</dbReference>
<dbReference type="NCBIfam" id="TIGR00087">
    <property type="entry name" value="surE"/>
    <property type="match status" value="1"/>
</dbReference>
<dbReference type="PANTHER" id="PTHR30457">
    <property type="entry name" value="5'-NUCLEOTIDASE SURE"/>
    <property type="match status" value="1"/>
</dbReference>
<dbReference type="PANTHER" id="PTHR30457:SF12">
    <property type="entry name" value="5'_3'-NUCLEOTIDASE SURE"/>
    <property type="match status" value="1"/>
</dbReference>
<dbReference type="Pfam" id="PF01975">
    <property type="entry name" value="SurE"/>
    <property type="match status" value="1"/>
</dbReference>
<dbReference type="SUPFAM" id="SSF64167">
    <property type="entry name" value="SurE-like"/>
    <property type="match status" value="1"/>
</dbReference>
<comment type="function">
    <text evidence="1">Nucleotidase that shows phosphatase activity on nucleoside 5'-monophosphates.</text>
</comment>
<comment type="catalytic activity">
    <reaction evidence="1">
        <text>a ribonucleoside 5'-phosphate + H2O = a ribonucleoside + phosphate</text>
        <dbReference type="Rhea" id="RHEA:12484"/>
        <dbReference type="ChEBI" id="CHEBI:15377"/>
        <dbReference type="ChEBI" id="CHEBI:18254"/>
        <dbReference type="ChEBI" id="CHEBI:43474"/>
        <dbReference type="ChEBI" id="CHEBI:58043"/>
        <dbReference type="EC" id="3.1.3.5"/>
    </reaction>
</comment>
<comment type="cofactor">
    <cofactor evidence="1">
        <name>a divalent metal cation</name>
        <dbReference type="ChEBI" id="CHEBI:60240"/>
    </cofactor>
    <text evidence="1">Binds 1 divalent metal cation per subunit.</text>
</comment>
<comment type="subcellular location">
    <subcellularLocation>
        <location evidence="1">Cytoplasm</location>
    </subcellularLocation>
</comment>
<comment type="similarity">
    <text evidence="1">Belongs to the SurE nucleotidase family.</text>
</comment>
<reference key="1">
    <citation type="submission" date="2007-07" db="EMBL/GenBank/DDBJ databases">
        <title>Complete sequence of chromosome of Shewanella baltica OS185.</title>
        <authorList>
            <consortium name="US DOE Joint Genome Institute"/>
            <person name="Copeland A."/>
            <person name="Lucas S."/>
            <person name="Lapidus A."/>
            <person name="Barry K."/>
            <person name="Glavina del Rio T."/>
            <person name="Dalin E."/>
            <person name="Tice H."/>
            <person name="Pitluck S."/>
            <person name="Sims D."/>
            <person name="Brettin T."/>
            <person name="Bruce D."/>
            <person name="Detter J.C."/>
            <person name="Han C."/>
            <person name="Schmutz J."/>
            <person name="Larimer F."/>
            <person name="Land M."/>
            <person name="Hauser L."/>
            <person name="Kyrpides N."/>
            <person name="Mikhailova N."/>
            <person name="Brettar I."/>
            <person name="Rodrigues J."/>
            <person name="Konstantinidis K."/>
            <person name="Tiedje J."/>
            <person name="Richardson P."/>
        </authorList>
    </citation>
    <scope>NUCLEOTIDE SEQUENCE [LARGE SCALE GENOMIC DNA]</scope>
    <source>
        <strain>OS185</strain>
    </source>
</reference>
<feature type="chain" id="PRO_0000335271" description="5'-nucleotidase SurE">
    <location>
        <begin position="1"/>
        <end position="249"/>
    </location>
</feature>
<feature type="binding site" evidence="1">
    <location>
        <position position="9"/>
    </location>
    <ligand>
        <name>a divalent metal cation</name>
        <dbReference type="ChEBI" id="CHEBI:60240"/>
    </ligand>
</feature>
<feature type="binding site" evidence="1">
    <location>
        <position position="10"/>
    </location>
    <ligand>
        <name>a divalent metal cation</name>
        <dbReference type="ChEBI" id="CHEBI:60240"/>
    </ligand>
</feature>
<feature type="binding site" evidence="1">
    <location>
        <position position="40"/>
    </location>
    <ligand>
        <name>a divalent metal cation</name>
        <dbReference type="ChEBI" id="CHEBI:60240"/>
    </ligand>
</feature>
<feature type="binding site" evidence="1">
    <location>
        <position position="92"/>
    </location>
    <ligand>
        <name>a divalent metal cation</name>
        <dbReference type="ChEBI" id="CHEBI:60240"/>
    </ligand>
</feature>
<keyword id="KW-0963">Cytoplasm</keyword>
<keyword id="KW-0378">Hydrolase</keyword>
<keyword id="KW-0479">Metal-binding</keyword>
<keyword id="KW-0547">Nucleotide-binding</keyword>
<sequence length="249" mass="26659">MIRILVSNDDGVNAPGIKALTEALTEIATVLTVGPDRNCSGASNSLTLTNPLRINRLDNGYISVHGTPTDCVHLAIRELYDGEPDMVVSGINAGANMGDDTLYSGTVAAAMEGRFLGFPAVAISLNGRKFEHYQSAAVYARRIVQGLLAQPLAKDQILNVNVPDLPLDQIKGIKVTRLGARHKAEGIVRTQDPAGREIFWLGPPGQEQDATEGTDFHAIANGYVSITPLTVDLTAYGQLTALQNWVDKI</sequence>
<accession>A6WR23</accession>
<evidence type="ECO:0000255" key="1">
    <source>
        <dbReference type="HAMAP-Rule" id="MF_00060"/>
    </source>
</evidence>
<proteinExistence type="inferred from homology"/>
<name>SURE_SHEB8</name>
<protein>
    <recommendedName>
        <fullName evidence="1">5'-nucleotidase SurE</fullName>
        <ecNumber evidence="1">3.1.3.5</ecNumber>
    </recommendedName>
    <alternativeName>
        <fullName evidence="1">Nucleoside 5'-monophosphate phosphohydrolase</fullName>
    </alternativeName>
</protein>
<gene>
    <name evidence="1" type="primary">surE</name>
    <name type="ordered locus">Shew185_3131</name>
</gene>